<reference key="1">
    <citation type="journal article" date="1997" name="Gene">
        <title>Cloning of mouse FGF10 and up-regulation of its gene expression during wound healing.</title>
        <authorList>
            <person name="Tagashira S."/>
            <person name="Harada H."/>
            <person name="Katsumata T."/>
            <person name="Itoh N."/>
            <person name="Nakatsuka M."/>
        </authorList>
    </citation>
    <scope>NUCLEOTIDE SEQUENCE [MRNA]</scope>
</reference>
<reference key="2">
    <citation type="submission" date="1997-03" db="EMBL/GenBank/DDBJ databases">
        <authorList>
            <person name="Duan D.R."/>
            <person name="Florence C."/>
        </authorList>
    </citation>
    <scope>NUCLEOTIDE SEQUENCE [MRNA]</scope>
    <source>
        <tissue>Lung</tissue>
    </source>
</reference>
<reference key="3">
    <citation type="journal article" date="2005" name="Science">
        <title>The transcriptional landscape of the mammalian genome.</title>
        <authorList>
            <person name="Carninci P."/>
            <person name="Kasukawa T."/>
            <person name="Katayama S."/>
            <person name="Gough J."/>
            <person name="Frith M.C."/>
            <person name="Maeda N."/>
            <person name="Oyama R."/>
            <person name="Ravasi T."/>
            <person name="Lenhard B."/>
            <person name="Wells C."/>
            <person name="Kodzius R."/>
            <person name="Shimokawa K."/>
            <person name="Bajic V.B."/>
            <person name="Brenner S.E."/>
            <person name="Batalov S."/>
            <person name="Forrest A.R."/>
            <person name="Zavolan M."/>
            <person name="Davis M.J."/>
            <person name="Wilming L.G."/>
            <person name="Aidinis V."/>
            <person name="Allen J.E."/>
            <person name="Ambesi-Impiombato A."/>
            <person name="Apweiler R."/>
            <person name="Aturaliya R.N."/>
            <person name="Bailey T.L."/>
            <person name="Bansal M."/>
            <person name="Baxter L."/>
            <person name="Beisel K.W."/>
            <person name="Bersano T."/>
            <person name="Bono H."/>
            <person name="Chalk A.M."/>
            <person name="Chiu K.P."/>
            <person name="Choudhary V."/>
            <person name="Christoffels A."/>
            <person name="Clutterbuck D.R."/>
            <person name="Crowe M.L."/>
            <person name="Dalla E."/>
            <person name="Dalrymple B.P."/>
            <person name="de Bono B."/>
            <person name="Della Gatta G."/>
            <person name="di Bernardo D."/>
            <person name="Down T."/>
            <person name="Engstrom P."/>
            <person name="Fagiolini M."/>
            <person name="Faulkner G."/>
            <person name="Fletcher C.F."/>
            <person name="Fukushima T."/>
            <person name="Furuno M."/>
            <person name="Futaki S."/>
            <person name="Gariboldi M."/>
            <person name="Georgii-Hemming P."/>
            <person name="Gingeras T.R."/>
            <person name="Gojobori T."/>
            <person name="Green R.E."/>
            <person name="Gustincich S."/>
            <person name="Harbers M."/>
            <person name="Hayashi Y."/>
            <person name="Hensch T.K."/>
            <person name="Hirokawa N."/>
            <person name="Hill D."/>
            <person name="Huminiecki L."/>
            <person name="Iacono M."/>
            <person name="Ikeo K."/>
            <person name="Iwama A."/>
            <person name="Ishikawa T."/>
            <person name="Jakt M."/>
            <person name="Kanapin A."/>
            <person name="Katoh M."/>
            <person name="Kawasawa Y."/>
            <person name="Kelso J."/>
            <person name="Kitamura H."/>
            <person name="Kitano H."/>
            <person name="Kollias G."/>
            <person name="Krishnan S.P."/>
            <person name="Kruger A."/>
            <person name="Kummerfeld S.K."/>
            <person name="Kurochkin I.V."/>
            <person name="Lareau L.F."/>
            <person name="Lazarevic D."/>
            <person name="Lipovich L."/>
            <person name="Liu J."/>
            <person name="Liuni S."/>
            <person name="McWilliam S."/>
            <person name="Madan Babu M."/>
            <person name="Madera M."/>
            <person name="Marchionni L."/>
            <person name="Matsuda H."/>
            <person name="Matsuzawa S."/>
            <person name="Miki H."/>
            <person name="Mignone F."/>
            <person name="Miyake S."/>
            <person name="Morris K."/>
            <person name="Mottagui-Tabar S."/>
            <person name="Mulder N."/>
            <person name="Nakano N."/>
            <person name="Nakauchi H."/>
            <person name="Ng P."/>
            <person name="Nilsson R."/>
            <person name="Nishiguchi S."/>
            <person name="Nishikawa S."/>
            <person name="Nori F."/>
            <person name="Ohara O."/>
            <person name="Okazaki Y."/>
            <person name="Orlando V."/>
            <person name="Pang K.C."/>
            <person name="Pavan W.J."/>
            <person name="Pavesi G."/>
            <person name="Pesole G."/>
            <person name="Petrovsky N."/>
            <person name="Piazza S."/>
            <person name="Reed J."/>
            <person name="Reid J.F."/>
            <person name="Ring B.Z."/>
            <person name="Ringwald M."/>
            <person name="Rost B."/>
            <person name="Ruan Y."/>
            <person name="Salzberg S.L."/>
            <person name="Sandelin A."/>
            <person name="Schneider C."/>
            <person name="Schoenbach C."/>
            <person name="Sekiguchi K."/>
            <person name="Semple C.A."/>
            <person name="Seno S."/>
            <person name="Sessa L."/>
            <person name="Sheng Y."/>
            <person name="Shibata Y."/>
            <person name="Shimada H."/>
            <person name="Shimada K."/>
            <person name="Silva D."/>
            <person name="Sinclair B."/>
            <person name="Sperling S."/>
            <person name="Stupka E."/>
            <person name="Sugiura K."/>
            <person name="Sultana R."/>
            <person name="Takenaka Y."/>
            <person name="Taki K."/>
            <person name="Tammoja K."/>
            <person name="Tan S.L."/>
            <person name="Tang S."/>
            <person name="Taylor M.S."/>
            <person name="Tegner J."/>
            <person name="Teichmann S.A."/>
            <person name="Ueda H.R."/>
            <person name="van Nimwegen E."/>
            <person name="Verardo R."/>
            <person name="Wei C.L."/>
            <person name="Yagi K."/>
            <person name="Yamanishi H."/>
            <person name="Zabarovsky E."/>
            <person name="Zhu S."/>
            <person name="Zimmer A."/>
            <person name="Hide W."/>
            <person name="Bult C."/>
            <person name="Grimmond S.M."/>
            <person name="Teasdale R.D."/>
            <person name="Liu E.T."/>
            <person name="Brusic V."/>
            <person name="Quackenbush J."/>
            <person name="Wahlestedt C."/>
            <person name="Mattick J.S."/>
            <person name="Hume D.A."/>
            <person name="Kai C."/>
            <person name="Sasaki D."/>
            <person name="Tomaru Y."/>
            <person name="Fukuda S."/>
            <person name="Kanamori-Katayama M."/>
            <person name="Suzuki M."/>
            <person name="Aoki J."/>
            <person name="Arakawa T."/>
            <person name="Iida J."/>
            <person name="Imamura K."/>
            <person name="Itoh M."/>
            <person name="Kato T."/>
            <person name="Kawaji H."/>
            <person name="Kawagashira N."/>
            <person name="Kawashima T."/>
            <person name="Kojima M."/>
            <person name="Kondo S."/>
            <person name="Konno H."/>
            <person name="Nakano K."/>
            <person name="Ninomiya N."/>
            <person name="Nishio T."/>
            <person name="Okada M."/>
            <person name="Plessy C."/>
            <person name="Shibata K."/>
            <person name="Shiraki T."/>
            <person name="Suzuki S."/>
            <person name="Tagami M."/>
            <person name="Waki K."/>
            <person name="Watahiki A."/>
            <person name="Okamura-Oho Y."/>
            <person name="Suzuki H."/>
            <person name="Kawai J."/>
            <person name="Hayashizaki Y."/>
        </authorList>
    </citation>
    <scope>NUCLEOTIDE SEQUENCE [LARGE SCALE MRNA]</scope>
    <source>
        <strain>C57BL/6J</strain>
        <tissue>Hippocampus</tissue>
        <tissue>Stomach</tissue>
    </source>
</reference>
<reference key="4">
    <citation type="journal article" date="2004" name="Genome Res.">
        <title>The status, quality, and expansion of the NIH full-length cDNA project: the Mammalian Gene Collection (MGC).</title>
        <authorList>
            <consortium name="The MGC Project Team"/>
        </authorList>
    </citation>
    <scope>NUCLEOTIDE SEQUENCE [LARGE SCALE MRNA]</scope>
    <source>
        <tissue>Olfactory epithelium</tissue>
    </source>
</reference>
<sequence>MWKWILTHCASAFPHLPGCCCCFLLLFLVSSFPVTCQALGQDMVSQEATNCSSSSSSFSSPSSAGRHVRSYNHLQGDVRWRRLFSFTKYFLTIEKNGKVSGTKNEDCPYSVLEITSVEIGVVAVKAINSNYYLAMNKKGKLYGSKEFNNDCKLKERIEENGYNTYASFNWQHNGRQMYVALNGKGAPRRGQKTRRKNTSAHFLPMTIQT</sequence>
<evidence type="ECO:0000250" key="1"/>
<evidence type="ECO:0000255" key="2"/>
<evidence type="ECO:0000305" key="3"/>
<accession>O35565</accession>
<accession>Q543V5</accession>
<proteinExistence type="evidence at transcript level"/>
<dbReference type="EMBL" id="D89080">
    <property type="protein sequence ID" value="BAA22836.1"/>
    <property type="molecule type" value="mRNA"/>
</dbReference>
<dbReference type="EMBL" id="U94517">
    <property type="protein sequence ID" value="AAD00761.1"/>
    <property type="molecule type" value="mRNA"/>
</dbReference>
<dbReference type="EMBL" id="AK034742">
    <property type="protein sequence ID" value="BAC28816.1"/>
    <property type="molecule type" value="mRNA"/>
</dbReference>
<dbReference type="EMBL" id="AK045267">
    <property type="protein sequence ID" value="BAC32287.1"/>
    <property type="molecule type" value="mRNA"/>
</dbReference>
<dbReference type="EMBL" id="AK085244">
    <property type="protein sequence ID" value="BAC39398.1"/>
    <property type="molecule type" value="mRNA"/>
</dbReference>
<dbReference type="EMBL" id="AK141633">
    <property type="protein sequence ID" value="BAE24777.1"/>
    <property type="molecule type" value="mRNA"/>
</dbReference>
<dbReference type="EMBL" id="BC048229">
    <property type="protein sequence ID" value="AAH48229.1"/>
    <property type="molecule type" value="mRNA"/>
</dbReference>
<dbReference type="CCDS" id="CCDS26795.1"/>
<dbReference type="RefSeq" id="NP_032028.1">
    <property type="nucleotide sequence ID" value="NM_008002.5"/>
</dbReference>
<dbReference type="SMR" id="O35565"/>
<dbReference type="BioGRID" id="199639">
    <property type="interactions" value="1"/>
</dbReference>
<dbReference type="FunCoup" id="O35565">
    <property type="interactions" value="975"/>
</dbReference>
<dbReference type="STRING" id="10090.ENSMUSP00000022246"/>
<dbReference type="GlyCosmos" id="O35565">
    <property type="glycosylation" value="2 sites, No reported glycans"/>
</dbReference>
<dbReference type="GlyGen" id="O35565">
    <property type="glycosylation" value="2 sites"/>
</dbReference>
<dbReference type="PhosphoSitePlus" id="O35565"/>
<dbReference type="PaxDb" id="10090-ENSMUSP00000022246"/>
<dbReference type="Antibodypedia" id="4149">
    <property type="antibodies" value="431 antibodies from 37 providers"/>
</dbReference>
<dbReference type="DNASU" id="14165"/>
<dbReference type="Ensembl" id="ENSMUST00000022246.9">
    <property type="protein sequence ID" value="ENSMUSP00000022246.9"/>
    <property type="gene ID" value="ENSMUSG00000021732.15"/>
</dbReference>
<dbReference type="GeneID" id="14165"/>
<dbReference type="KEGG" id="mmu:14165"/>
<dbReference type="UCSC" id="uc007ryv.2">
    <property type="organism name" value="mouse"/>
</dbReference>
<dbReference type="AGR" id="MGI:1099809"/>
<dbReference type="CTD" id="2255"/>
<dbReference type="MGI" id="MGI:1099809">
    <property type="gene designation" value="Fgf10"/>
</dbReference>
<dbReference type="VEuPathDB" id="HostDB:ENSMUSG00000021732"/>
<dbReference type="eggNOG" id="KOG3885">
    <property type="taxonomic scope" value="Eukaryota"/>
</dbReference>
<dbReference type="GeneTree" id="ENSGT00940000158907"/>
<dbReference type="HOGENOM" id="CLU_081609_3_1_1"/>
<dbReference type="InParanoid" id="O35565"/>
<dbReference type="OMA" id="EFNTDCK"/>
<dbReference type="OrthoDB" id="5987799at2759"/>
<dbReference type="PhylomeDB" id="O35565"/>
<dbReference type="TreeFam" id="TF317805"/>
<dbReference type="Reactome" id="R-MMU-109704">
    <property type="pathway name" value="PI3K Cascade"/>
</dbReference>
<dbReference type="Reactome" id="R-MMU-1257604">
    <property type="pathway name" value="PIP3 activates AKT signaling"/>
</dbReference>
<dbReference type="Reactome" id="R-MMU-190370">
    <property type="pathway name" value="FGFR1b ligand binding and activation"/>
</dbReference>
<dbReference type="Reactome" id="R-MMU-190377">
    <property type="pathway name" value="FGFR2b ligand binding and activation"/>
</dbReference>
<dbReference type="Reactome" id="R-MMU-5654219">
    <property type="pathway name" value="Phospholipase C-mediated cascade: FGFR1"/>
</dbReference>
<dbReference type="Reactome" id="R-MMU-5654221">
    <property type="pathway name" value="Phospholipase C-mediated cascade, FGFR2"/>
</dbReference>
<dbReference type="Reactome" id="R-MMU-5654687">
    <property type="pathway name" value="Downstream signaling of activated FGFR1"/>
</dbReference>
<dbReference type="Reactome" id="R-MMU-5654688">
    <property type="pathway name" value="SHC-mediated cascade:FGFR1"/>
</dbReference>
<dbReference type="Reactome" id="R-MMU-5654689">
    <property type="pathway name" value="PI-3K cascade:FGFR1"/>
</dbReference>
<dbReference type="Reactome" id="R-MMU-5654693">
    <property type="pathway name" value="FRS-mediated FGFR1 signaling"/>
</dbReference>
<dbReference type="Reactome" id="R-MMU-5654695">
    <property type="pathway name" value="PI-3K cascade:FGFR2"/>
</dbReference>
<dbReference type="Reactome" id="R-MMU-5654699">
    <property type="pathway name" value="SHC-mediated cascade:FGFR2"/>
</dbReference>
<dbReference type="Reactome" id="R-MMU-5654700">
    <property type="pathway name" value="FRS-mediated FGFR2 signaling"/>
</dbReference>
<dbReference type="Reactome" id="R-MMU-5654726">
    <property type="pathway name" value="Negative regulation of FGFR1 signaling"/>
</dbReference>
<dbReference type="Reactome" id="R-MMU-5654727">
    <property type="pathway name" value="Negative regulation of FGFR2 signaling"/>
</dbReference>
<dbReference type="Reactome" id="R-MMU-5658623">
    <property type="pathway name" value="FGFRL1 modulation of FGFR1 signaling"/>
</dbReference>
<dbReference type="Reactome" id="R-MMU-5673001">
    <property type="pathway name" value="RAF/MAP kinase cascade"/>
</dbReference>
<dbReference type="Reactome" id="R-MMU-6811558">
    <property type="pathway name" value="PI5P, PP2A and IER3 Regulate PI3K/AKT Signaling"/>
</dbReference>
<dbReference type="BioGRID-ORCS" id="14165">
    <property type="hits" value="1 hit in 115 CRISPR screens"/>
</dbReference>
<dbReference type="ChiTaRS" id="Fgf10">
    <property type="organism name" value="mouse"/>
</dbReference>
<dbReference type="PRO" id="PR:O35565"/>
<dbReference type="Proteomes" id="UP000000589">
    <property type="component" value="Chromosome 13"/>
</dbReference>
<dbReference type="RNAct" id="O35565">
    <property type="molecule type" value="protein"/>
</dbReference>
<dbReference type="Bgee" id="ENSMUSG00000021732">
    <property type="expression patterns" value="Expressed in lung mesenchyme and 169 other cell types or tissues"/>
</dbReference>
<dbReference type="GO" id="GO:0009986">
    <property type="term" value="C:cell surface"/>
    <property type="evidence" value="ECO:0007669"/>
    <property type="project" value="Ensembl"/>
</dbReference>
<dbReference type="GO" id="GO:0005615">
    <property type="term" value="C:extracellular space"/>
    <property type="evidence" value="ECO:0000314"/>
    <property type="project" value="MGI"/>
</dbReference>
<dbReference type="GO" id="GO:0005634">
    <property type="term" value="C:nucleus"/>
    <property type="evidence" value="ECO:0007669"/>
    <property type="project" value="Ensembl"/>
</dbReference>
<dbReference type="GO" id="GO:0005886">
    <property type="term" value="C:plasma membrane"/>
    <property type="evidence" value="ECO:0007669"/>
    <property type="project" value="Ensembl"/>
</dbReference>
<dbReference type="GO" id="GO:0042056">
    <property type="term" value="F:chemoattractant activity"/>
    <property type="evidence" value="ECO:0000314"/>
    <property type="project" value="MGI"/>
</dbReference>
<dbReference type="GO" id="GO:0008083">
    <property type="term" value="F:growth factor activity"/>
    <property type="evidence" value="ECO:0007669"/>
    <property type="project" value="UniProtKB-KW"/>
</dbReference>
<dbReference type="GO" id="GO:0008201">
    <property type="term" value="F:heparin binding"/>
    <property type="evidence" value="ECO:0007669"/>
    <property type="project" value="Ensembl"/>
</dbReference>
<dbReference type="GO" id="GO:0005111">
    <property type="term" value="F:type 2 fibroblast growth factor receptor binding"/>
    <property type="evidence" value="ECO:0007669"/>
    <property type="project" value="Ensembl"/>
</dbReference>
<dbReference type="GO" id="GO:0030036">
    <property type="term" value="P:actin cytoskeleton organization"/>
    <property type="evidence" value="ECO:0007669"/>
    <property type="project" value="Ensembl"/>
</dbReference>
<dbReference type="GO" id="GO:0001525">
    <property type="term" value="P:angiogenesis"/>
    <property type="evidence" value="ECO:0007669"/>
    <property type="project" value="Ensembl"/>
</dbReference>
<dbReference type="GO" id="GO:0048645">
    <property type="term" value="P:animal organ formation"/>
    <property type="evidence" value="ECO:0000315"/>
    <property type="project" value="MGI"/>
</dbReference>
<dbReference type="GO" id="GO:0009887">
    <property type="term" value="P:animal organ morphogenesis"/>
    <property type="evidence" value="ECO:0000314"/>
    <property type="project" value="MGI"/>
</dbReference>
<dbReference type="GO" id="GO:0048514">
    <property type="term" value="P:blood vessel morphogenesis"/>
    <property type="evidence" value="ECO:0000315"/>
    <property type="project" value="MGI"/>
</dbReference>
<dbReference type="GO" id="GO:0001974">
    <property type="term" value="P:blood vessel remodeling"/>
    <property type="evidence" value="ECO:0000316"/>
    <property type="project" value="MGI"/>
</dbReference>
<dbReference type="GO" id="GO:0060667">
    <property type="term" value="P:branch elongation involved in salivary gland morphogenesis"/>
    <property type="evidence" value="ECO:0000315"/>
    <property type="project" value="MGI"/>
</dbReference>
<dbReference type="GO" id="GO:0060445">
    <property type="term" value="P:branching involved in salivary gland morphogenesis"/>
    <property type="evidence" value="ECO:0000314"/>
    <property type="project" value="MGI"/>
</dbReference>
<dbReference type="GO" id="GO:0060436">
    <property type="term" value="P:bronchiole morphogenesis"/>
    <property type="evidence" value="ECO:0000315"/>
    <property type="project" value="MGI"/>
</dbReference>
<dbReference type="GO" id="GO:0060449">
    <property type="term" value="P:bud elongation involved in lung branching"/>
    <property type="evidence" value="ECO:0000316"/>
    <property type="project" value="MGI"/>
</dbReference>
<dbReference type="GO" id="GO:0060447">
    <property type="term" value="P:bud outgrowth involved in lung branching"/>
    <property type="evidence" value="ECO:0000266"/>
    <property type="project" value="MGI"/>
</dbReference>
<dbReference type="GO" id="GO:0008283">
    <property type="term" value="P:cell population proliferation"/>
    <property type="evidence" value="ECO:0000314"/>
    <property type="project" value="MGI"/>
</dbReference>
<dbReference type="GO" id="GO:0007267">
    <property type="term" value="P:cell-cell signaling"/>
    <property type="evidence" value="ECO:0000314"/>
    <property type="project" value="MGI"/>
</dbReference>
<dbReference type="GO" id="GO:0006935">
    <property type="term" value="P:chemotaxis"/>
    <property type="evidence" value="ECO:0000314"/>
    <property type="project" value="MGI"/>
</dbReference>
<dbReference type="GO" id="GO:0007368">
    <property type="term" value="P:determination of left/right symmetry"/>
    <property type="evidence" value="ECO:0000315"/>
    <property type="project" value="MGI"/>
</dbReference>
<dbReference type="GO" id="GO:0048565">
    <property type="term" value="P:digestive tract development"/>
    <property type="evidence" value="ECO:0000315"/>
    <property type="project" value="MGI"/>
</dbReference>
<dbReference type="GO" id="GO:0031076">
    <property type="term" value="P:embryonic camera-type eye development"/>
    <property type="evidence" value="ECO:0000315"/>
    <property type="project" value="MGI"/>
</dbReference>
<dbReference type="GO" id="GO:0048566">
    <property type="term" value="P:embryonic digestive tract development"/>
    <property type="evidence" value="ECO:0000315"/>
    <property type="project" value="MGI"/>
</dbReference>
<dbReference type="GO" id="GO:0048557">
    <property type="term" value="P:embryonic digestive tract morphogenesis"/>
    <property type="evidence" value="ECO:0000315"/>
    <property type="project" value="MGI"/>
</dbReference>
<dbReference type="GO" id="GO:0030538">
    <property type="term" value="P:embryonic genitalia morphogenesis"/>
    <property type="evidence" value="ECO:0000315"/>
    <property type="project" value="MGI"/>
</dbReference>
<dbReference type="GO" id="GO:0009880">
    <property type="term" value="P:embryonic pattern specification"/>
    <property type="evidence" value="ECO:0000315"/>
    <property type="project" value="MGI"/>
</dbReference>
<dbReference type="GO" id="GO:0001935">
    <property type="term" value="P:endothelial cell proliferation"/>
    <property type="evidence" value="ECO:0000314"/>
    <property type="project" value="MGI"/>
</dbReference>
<dbReference type="GO" id="GO:0008544">
    <property type="term" value="P:epidermis development"/>
    <property type="evidence" value="ECO:0000315"/>
    <property type="project" value="MGI"/>
</dbReference>
<dbReference type="GO" id="GO:0048730">
    <property type="term" value="P:epidermis morphogenesis"/>
    <property type="evidence" value="ECO:0000315"/>
    <property type="project" value="MGI"/>
</dbReference>
<dbReference type="GO" id="GO:0030855">
    <property type="term" value="P:epithelial cell differentiation"/>
    <property type="evidence" value="ECO:0000314"/>
    <property type="project" value="MGI"/>
</dbReference>
<dbReference type="GO" id="GO:0050673">
    <property type="term" value="P:epithelial cell proliferation"/>
    <property type="evidence" value="ECO:0000314"/>
    <property type="project" value="MGI"/>
</dbReference>
<dbReference type="GO" id="GO:0060664">
    <property type="term" value="P:epithelial cell proliferation involved in salivary gland morphogenesis"/>
    <property type="evidence" value="ECO:0000315"/>
    <property type="project" value="MGI"/>
</dbReference>
<dbReference type="GO" id="GO:0060441">
    <property type="term" value="P:epithelial tube branching involved in lung morphogenesis"/>
    <property type="evidence" value="ECO:0000314"/>
    <property type="project" value="MGI"/>
</dbReference>
<dbReference type="GO" id="GO:0070371">
    <property type="term" value="P:ERK1 and ERK2 cascade"/>
    <property type="evidence" value="ECO:0000315"/>
    <property type="project" value="MGI"/>
</dbReference>
<dbReference type="GO" id="GO:0000132">
    <property type="term" value="P:establishment of mitotic spindle orientation"/>
    <property type="evidence" value="ECO:0000316"/>
    <property type="project" value="MGI"/>
</dbReference>
<dbReference type="GO" id="GO:0097192">
    <property type="term" value="P:extrinsic apoptotic signaling pathway in absence of ligand"/>
    <property type="evidence" value="ECO:0000315"/>
    <property type="project" value="MGI"/>
</dbReference>
<dbReference type="GO" id="GO:0048807">
    <property type="term" value="P:female genitalia morphogenesis"/>
    <property type="evidence" value="ECO:0000315"/>
    <property type="project" value="MGI"/>
</dbReference>
<dbReference type="GO" id="GO:1902178">
    <property type="term" value="P:fibroblast growth factor receptor apoptotic signaling pathway"/>
    <property type="evidence" value="ECO:0000314"/>
    <property type="project" value="MGI"/>
</dbReference>
<dbReference type="GO" id="GO:0060595">
    <property type="term" value="P:fibroblast growth factor receptor signaling pathway involved in mammary gland specification"/>
    <property type="evidence" value="ECO:0000314"/>
    <property type="project" value="MGI"/>
</dbReference>
<dbReference type="GO" id="GO:0048144">
    <property type="term" value="P:fibroblast proliferation"/>
    <property type="evidence" value="ECO:0000315"/>
    <property type="project" value="MGI"/>
</dbReference>
<dbReference type="GO" id="GO:0031069">
    <property type="term" value="P:hair follicle morphogenesis"/>
    <property type="evidence" value="ECO:0000315"/>
    <property type="project" value="MGI"/>
</dbReference>
<dbReference type="GO" id="GO:0070384">
    <property type="term" value="P:Harderian gland development"/>
    <property type="evidence" value="ECO:0000315"/>
    <property type="project" value="MGI"/>
</dbReference>
<dbReference type="GO" id="GO:0050930">
    <property type="term" value="P:induction of positive chemotaxis"/>
    <property type="evidence" value="ECO:0000314"/>
    <property type="project" value="MGI"/>
</dbReference>
<dbReference type="GO" id="GO:0042472">
    <property type="term" value="P:inner ear morphogenesis"/>
    <property type="evidence" value="ECO:0000315"/>
    <property type="project" value="MGI"/>
</dbReference>
<dbReference type="GO" id="GO:0043616">
    <property type="term" value="P:keratinocyte proliferation"/>
    <property type="evidence" value="ECO:0000315"/>
    <property type="project" value="MGI"/>
</dbReference>
<dbReference type="GO" id="GO:0032808">
    <property type="term" value="P:lacrimal gland development"/>
    <property type="evidence" value="ECO:0000315"/>
    <property type="project" value="MGI"/>
</dbReference>
<dbReference type="GO" id="GO:0060174">
    <property type="term" value="P:limb bud formation"/>
    <property type="evidence" value="ECO:0000315"/>
    <property type="project" value="MGI"/>
</dbReference>
<dbReference type="GO" id="GO:0060173">
    <property type="term" value="P:limb development"/>
    <property type="evidence" value="ECO:0000315"/>
    <property type="project" value="MGI"/>
</dbReference>
<dbReference type="GO" id="GO:0035108">
    <property type="term" value="P:limb morphogenesis"/>
    <property type="evidence" value="ECO:0000315"/>
    <property type="project" value="MGI"/>
</dbReference>
<dbReference type="GO" id="GO:0048286">
    <property type="term" value="P:lung alveolus development"/>
    <property type="evidence" value="ECO:0000315"/>
    <property type="project" value="MGI"/>
</dbReference>
<dbReference type="GO" id="GO:0030324">
    <property type="term" value="P:lung development"/>
    <property type="evidence" value="ECO:0000314"/>
    <property type="project" value="MGI"/>
</dbReference>
<dbReference type="GO" id="GO:0060428">
    <property type="term" value="P:lung epithelium development"/>
    <property type="evidence" value="ECO:0000266"/>
    <property type="project" value="MGI"/>
</dbReference>
<dbReference type="GO" id="GO:0060425">
    <property type="term" value="P:lung morphogenesis"/>
    <property type="evidence" value="ECO:0000315"/>
    <property type="project" value="MGI"/>
</dbReference>
<dbReference type="GO" id="GO:0061115">
    <property type="term" value="P:lung proximal/distal axis specification"/>
    <property type="evidence" value="ECO:0000314"/>
    <property type="project" value="MGI"/>
</dbReference>
<dbReference type="GO" id="GO:0060430">
    <property type="term" value="P:lung saccule development"/>
    <property type="evidence" value="ECO:0007669"/>
    <property type="project" value="Ensembl"/>
</dbReference>
<dbReference type="GO" id="GO:0048808">
    <property type="term" value="P:male genitalia morphogenesis"/>
    <property type="evidence" value="ECO:0000315"/>
    <property type="project" value="MGI"/>
</dbReference>
<dbReference type="GO" id="GO:0060615">
    <property type="term" value="P:mammary gland bud formation"/>
    <property type="evidence" value="ECO:0000315"/>
    <property type="project" value="MGI"/>
</dbReference>
<dbReference type="GO" id="GO:0060594">
    <property type="term" value="P:mammary gland specification"/>
    <property type="evidence" value="ECO:0000316"/>
    <property type="project" value="MGI"/>
</dbReference>
<dbReference type="GO" id="GO:0060915">
    <property type="term" value="P:mesenchymal cell differentiation involved in lung development"/>
    <property type="evidence" value="ECO:0000316"/>
    <property type="project" value="MGI"/>
</dbReference>
<dbReference type="GO" id="GO:0060496">
    <property type="term" value="P:mesenchymal-epithelial cell signaling involved in lung development"/>
    <property type="evidence" value="ECO:0000314"/>
    <property type="project" value="MGI"/>
</dbReference>
<dbReference type="GO" id="GO:0001823">
    <property type="term" value="P:mesonephros development"/>
    <property type="evidence" value="ECO:0007669"/>
    <property type="project" value="Ensembl"/>
</dbReference>
<dbReference type="GO" id="GO:0003338">
    <property type="term" value="P:metanephros morphogenesis"/>
    <property type="evidence" value="ECO:0000315"/>
    <property type="project" value="MGI"/>
</dbReference>
<dbReference type="GO" id="GO:0000278">
    <property type="term" value="P:mitotic cell cycle"/>
    <property type="evidence" value="ECO:0000315"/>
    <property type="project" value="MGI"/>
</dbReference>
<dbReference type="GO" id="GO:0042693">
    <property type="term" value="P:muscle cell fate commitment"/>
    <property type="evidence" value="ECO:0000315"/>
    <property type="project" value="MGI"/>
</dbReference>
<dbReference type="GO" id="GO:0030857">
    <property type="term" value="P:negative regulation of epithelial cell differentiation"/>
    <property type="evidence" value="ECO:0000314"/>
    <property type="project" value="MGI"/>
</dbReference>
<dbReference type="GO" id="GO:2001240">
    <property type="term" value="P:negative regulation of extrinsic apoptotic signaling pathway in absence of ligand"/>
    <property type="evidence" value="ECO:0000315"/>
    <property type="project" value="MGI"/>
</dbReference>
<dbReference type="GO" id="GO:2000647">
    <property type="term" value="P:negative regulation of stem cell proliferation"/>
    <property type="evidence" value="ECO:0000314"/>
    <property type="project" value="MGI"/>
</dbReference>
<dbReference type="GO" id="GO:0042475">
    <property type="term" value="P:odontogenesis of dentin-containing tooth"/>
    <property type="evidence" value="ECO:0000315"/>
    <property type="project" value="MGI"/>
</dbReference>
<dbReference type="GO" id="GO:0035265">
    <property type="term" value="P:organ growth"/>
    <property type="evidence" value="ECO:0000315"/>
    <property type="project" value="MGI"/>
</dbReference>
<dbReference type="GO" id="GO:0001759">
    <property type="term" value="P:organ induction"/>
    <property type="evidence" value="ECO:0000316"/>
    <property type="project" value="MGI"/>
</dbReference>
<dbReference type="GO" id="GO:0030916">
    <property type="term" value="P:otic vesicle formation"/>
    <property type="evidence" value="ECO:0000316"/>
    <property type="project" value="MGI"/>
</dbReference>
<dbReference type="GO" id="GO:0031016">
    <property type="term" value="P:pancreas development"/>
    <property type="evidence" value="ECO:0000315"/>
    <property type="project" value="MGI"/>
</dbReference>
<dbReference type="GO" id="GO:0021983">
    <property type="term" value="P:pituitary gland development"/>
    <property type="evidence" value="ECO:0000315"/>
    <property type="project" value="MGI"/>
</dbReference>
<dbReference type="GO" id="GO:0050918">
    <property type="term" value="P:positive chemotaxis"/>
    <property type="evidence" value="ECO:0000314"/>
    <property type="project" value="MGI"/>
</dbReference>
<dbReference type="GO" id="GO:0090263">
    <property type="term" value="P:positive regulation of canonical Wnt signaling pathway"/>
    <property type="evidence" value="ECO:0000315"/>
    <property type="project" value="MGI"/>
</dbReference>
<dbReference type="GO" id="GO:0045739">
    <property type="term" value="P:positive regulation of DNA repair"/>
    <property type="evidence" value="ECO:0007669"/>
    <property type="project" value="Ensembl"/>
</dbReference>
<dbReference type="GO" id="GO:0045893">
    <property type="term" value="P:positive regulation of DNA-templated transcription"/>
    <property type="evidence" value="ECO:0000314"/>
    <property type="project" value="CACAO"/>
</dbReference>
<dbReference type="GO" id="GO:0001938">
    <property type="term" value="P:positive regulation of endothelial cell proliferation"/>
    <property type="evidence" value="ECO:0000314"/>
    <property type="project" value="MGI"/>
</dbReference>
<dbReference type="GO" id="GO:0010634">
    <property type="term" value="P:positive regulation of epithelial cell migration"/>
    <property type="evidence" value="ECO:0000314"/>
    <property type="project" value="MGI"/>
</dbReference>
<dbReference type="GO" id="GO:0050679">
    <property type="term" value="P:positive regulation of epithelial cell proliferation"/>
    <property type="evidence" value="ECO:0000314"/>
    <property type="project" value="MGI"/>
</dbReference>
<dbReference type="GO" id="GO:0070374">
    <property type="term" value="P:positive regulation of ERK1 and ERK2 cascade"/>
    <property type="evidence" value="ECO:0000315"/>
    <property type="project" value="MGI"/>
</dbReference>
<dbReference type="GO" id="GO:0048146">
    <property type="term" value="P:positive regulation of fibroblast proliferation"/>
    <property type="evidence" value="ECO:0000315"/>
    <property type="project" value="MGI"/>
</dbReference>
<dbReference type="GO" id="GO:1900087">
    <property type="term" value="P:positive regulation of G1/S transition of mitotic cell cycle"/>
    <property type="evidence" value="ECO:0007669"/>
    <property type="project" value="Ensembl"/>
</dbReference>
<dbReference type="GO" id="GO:0071338">
    <property type="term" value="P:positive regulation of hair follicle cell proliferation"/>
    <property type="evidence" value="ECO:0007669"/>
    <property type="project" value="Ensembl"/>
</dbReference>
<dbReference type="GO" id="GO:0051549">
    <property type="term" value="P:positive regulation of keratinocyte migration"/>
    <property type="evidence" value="ECO:0007669"/>
    <property type="project" value="Ensembl"/>
</dbReference>
<dbReference type="GO" id="GO:0010838">
    <property type="term" value="P:positive regulation of keratinocyte proliferation"/>
    <property type="evidence" value="ECO:0000315"/>
    <property type="project" value="MGI"/>
</dbReference>
<dbReference type="GO" id="GO:0050671">
    <property type="term" value="P:positive regulation of lymphocyte proliferation"/>
    <property type="evidence" value="ECO:0007669"/>
    <property type="project" value="Ensembl"/>
</dbReference>
<dbReference type="GO" id="GO:0045931">
    <property type="term" value="P:positive regulation of mitotic cell cycle"/>
    <property type="evidence" value="ECO:0000315"/>
    <property type="project" value="MGI"/>
</dbReference>
<dbReference type="GO" id="GO:0045747">
    <property type="term" value="P:positive regulation of Notch signaling pathway"/>
    <property type="evidence" value="ECO:0000316"/>
    <property type="project" value="MGI"/>
</dbReference>
<dbReference type="GO" id="GO:0046579">
    <property type="term" value="P:positive regulation of Ras protein signal transduction"/>
    <property type="evidence" value="ECO:0007669"/>
    <property type="project" value="Ensembl"/>
</dbReference>
<dbReference type="GO" id="GO:2000648">
    <property type="term" value="P:positive regulation of stem cell proliferation"/>
    <property type="evidence" value="ECO:0000314"/>
    <property type="project" value="MGI"/>
</dbReference>
<dbReference type="GO" id="GO:0045944">
    <property type="term" value="P:positive regulation of transcription by RNA polymerase II"/>
    <property type="evidence" value="ECO:0000314"/>
    <property type="project" value="MGI"/>
</dbReference>
<dbReference type="GO" id="GO:0050677">
    <property type="term" value="P:positive regulation of urothelial cell proliferation"/>
    <property type="evidence" value="ECO:0000266"/>
    <property type="project" value="MGI"/>
</dbReference>
<dbReference type="GO" id="GO:0030949">
    <property type="term" value="P:positive regulation of vascular endothelial growth factor receptor signaling pathway"/>
    <property type="evidence" value="ECO:0000315"/>
    <property type="project" value="MGI"/>
</dbReference>
<dbReference type="GO" id="GO:0070352">
    <property type="term" value="P:positive regulation of white fat cell proliferation"/>
    <property type="evidence" value="ECO:0000315"/>
    <property type="project" value="MGI"/>
</dbReference>
<dbReference type="GO" id="GO:0030177">
    <property type="term" value="P:positive regulation of Wnt signaling pathway"/>
    <property type="evidence" value="ECO:0000315"/>
    <property type="project" value="MGI"/>
</dbReference>
<dbReference type="GO" id="GO:0060513">
    <property type="term" value="P:prostatic bud formation"/>
    <property type="evidence" value="ECO:0000316"/>
    <property type="project" value="MGI"/>
</dbReference>
<dbReference type="GO" id="GO:0034394">
    <property type="term" value="P:protein localization to cell surface"/>
    <property type="evidence" value="ECO:0007669"/>
    <property type="project" value="Ensembl"/>
</dbReference>
<dbReference type="GO" id="GO:0060019">
    <property type="term" value="P:radial glial cell differentiation"/>
    <property type="evidence" value="ECO:0000315"/>
    <property type="project" value="UniProtKB"/>
</dbReference>
<dbReference type="GO" id="GO:0032925">
    <property type="term" value="P:regulation of activin receptor signaling pathway"/>
    <property type="evidence" value="ECO:0000315"/>
    <property type="project" value="MGI"/>
</dbReference>
<dbReference type="GO" id="GO:0060665">
    <property type="term" value="P:regulation of branching involved in salivary gland morphogenesis by mesenchymal-epithelial signaling"/>
    <property type="evidence" value="ECO:0000314"/>
    <property type="project" value="MGI"/>
</dbReference>
<dbReference type="GO" id="GO:0010468">
    <property type="term" value="P:regulation of gene expression"/>
    <property type="evidence" value="ECO:0000315"/>
    <property type="project" value="MGI"/>
</dbReference>
<dbReference type="GO" id="GO:0046877">
    <property type="term" value="P:regulation of saliva secretion"/>
    <property type="evidence" value="ECO:0007669"/>
    <property type="project" value="Ensembl"/>
</dbReference>
<dbReference type="GO" id="GO:0008589">
    <property type="term" value="P:regulation of smoothened signaling pathway"/>
    <property type="evidence" value="ECO:0000315"/>
    <property type="project" value="MGI"/>
</dbReference>
<dbReference type="GO" id="GO:0060541">
    <property type="term" value="P:respiratory system development"/>
    <property type="evidence" value="ECO:0000314"/>
    <property type="project" value="MGI"/>
</dbReference>
<dbReference type="GO" id="GO:0032355">
    <property type="term" value="P:response to estradiol"/>
    <property type="evidence" value="ECO:0007669"/>
    <property type="project" value="Ensembl"/>
</dbReference>
<dbReference type="GO" id="GO:0032496">
    <property type="term" value="P:response to lipopolysaccharide"/>
    <property type="evidence" value="ECO:0007669"/>
    <property type="project" value="Ensembl"/>
</dbReference>
<dbReference type="GO" id="GO:0007435">
    <property type="term" value="P:salivary gland morphogenesis"/>
    <property type="evidence" value="ECO:0000315"/>
    <property type="project" value="MGI"/>
</dbReference>
<dbReference type="GO" id="GO:0061033">
    <property type="term" value="P:secretion by lung epithelial cell involved in lung growth"/>
    <property type="evidence" value="ECO:0007669"/>
    <property type="project" value="Ensembl"/>
</dbReference>
<dbReference type="GO" id="GO:0060879">
    <property type="term" value="P:semicircular canal fusion"/>
    <property type="evidence" value="ECO:0000315"/>
    <property type="project" value="MGI"/>
</dbReference>
<dbReference type="GO" id="GO:0048752">
    <property type="term" value="P:semicircular canal morphogenesis"/>
    <property type="evidence" value="ECO:0000316"/>
    <property type="project" value="MGI"/>
</dbReference>
<dbReference type="GO" id="GO:0051145">
    <property type="term" value="P:smooth muscle cell differentiation"/>
    <property type="evidence" value="ECO:0000315"/>
    <property type="project" value="MGI"/>
</dbReference>
<dbReference type="GO" id="GO:0035019">
    <property type="term" value="P:somatic stem cell population maintenance"/>
    <property type="evidence" value="ECO:0000315"/>
    <property type="project" value="MGI"/>
</dbReference>
<dbReference type="GO" id="GO:0048536">
    <property type="term" value="P:spleen development"/>
    <property type="evidence" value="ECO:0000315"/>
    <property type="project" value="MGI"/>
</dbReference>
<dbReference type="GO" id="GO:0072089">
    <property type="term" value="P:stem cell proliferation"/>
    <property type="evidence" value="ECO:0000314"/>
    <property type="project" value="MGI"/>
</dbReference>
<dbReference type="GO" id="GO:0060661">
    <property type="term" value="P:submandibular salivary gland formation"/>
    <property type="evidence" value="ECO:0000315"/>
    <property type="project" value="MGI"/>
</dbReference>
<dbReference type="GO" id="GO:0070075">
    <property type="term" value="P:tear secretion"/>
    <property type="evidence" value="ECO:0007669"/>
    <property type="project" value="Ensembl"/>
</dbReference>
<dbReference type="GO" id="GO:0048538">
    <property type="term" value="P:thymus development"/>
    <property type="evidence" value="ECO:0007669"/>
    <property type="project" value="Ensembl"/>
</dbReference>
<dbReference type="GO" id="GO:0030878">
    <property type="term" value="P:thyroid gland development"/>
    <property type="evidence" value="ECO:0000315"/>
    <property type="project" value="MGI"/>
</dbReference>
<dbReference type="GO" id="GO:0042246">
    <property type="term" value="P:tissue regeneration"/>
    <property type="evidence" value="ECO:0007669"/>
    <property type="project" value="Ensembl"/>
</dbReference>
<dbReference type="GO" id="GO:0060510">
    <property type="term" value="P:type II pneumocyte differentiation"/>
    <property type="evidence" value="ECO:0000314"/>
    <property type="project" value="MGI"/>
</dbReference>
<dbReference type="GO" id="GO:0050674">
    <property type="term" value="P:urothelial cell proliferation"/>
    <property type="evidence" value="ECO:0007669"/>
    <property type="project" value="Ensembl"/>
</dbReference>
<dbReference type="GO" id="GO:0048010">
    <property type="term" value="P:vascular endothelial growth factor receptor signaling pathway"/>
    <property type="evidence" value="ECO:0000315"/>
    <property type="project" value="MGI"/>
</dbReference>
<dbReference type="GO" id="GO:0050872">
    <property type="term" value="P:white fat cell differentiation"/>
    <property type="evidence" value="ECO:0000315"/>
    <property type="project" value="MGI"/>
</dbReference>
<dbReference type="GO" id="GO:0070343">
    <property type="term" value="P:white fat cell proliferation"/>
    <property type="evidence" value="ECO:0000315"/>
    <property type="project" value="MGI"/>
</dbReference>
<dbReference type="GO" id="GO:0016055">
    <property type="term" value="P:Wnt signaling pathway"/>
    <property type="evidence" value="ECO:0000315"/>
    <property type="project" value="MGI"/>
</dbReference>
<dbReference type="GO" id="GO:0042060">
    <property type="term" value="P:wound healing"/>
    <property type="evidence" value="ECO:0007669"/>
    <property type="project" value="Ensembl"/>
</dbReference>
<dbReference type="CDD" id="cd23320">
    <property type="entry name" value="beta-trefoil_FGF10"/>
    <property type="match status" value="1"/>
</dbReference>
<dbReference type="FunFam" id="2.80.10.50:FF:000004">
    <property type="entry name" value="Fibroblast growth factor"/>
    <property type="match status" value="1"/>
</dbReference>
<dbReference type="Gene3D" id="2.80.10.50">
    <property type="match status" value="1"/>
</dbReference>
<dbReference type="InterPro" id="IPR002209">
    <property type="entry name" value="Fibroblast_GF_fam"/>
</dbReference>
<dbReference type="InterPro" id="IPR008996">
    <property type="entry name" value="IL1/FGF"/>
</dbReference>
<dbReference type="PANTHER" id="PTHR11486">
    <property type="entry name" value="FIBROBLAST GROWTH FACTOR"/>
    <property type="match status" value="1"/>
</dbReference>
<dbReference type="Pfam" id="PF00167">
    <property type="entry name" value="FGF"/>
    <property type="match status" value="1"/>
</dbReference>
<dbReference type="PRINTS" id="PR00263">
    <property type="entry name" value="HBGFFGF"/>
</dbReference>
<dbReference type="PRINTS" id="PR00262">
    <property type="entry name" value="IL1HBGF"/>
</dbReference>
<dbReference type="SMART" id="SM00442">
    <property type="entry name" value="FGF"/>
    <property type="match status" value="1"/>
</dbReference>
<dbReference type="SUPFAM" id="SSF50353">
    <property type="entry name" value="Cytokine"/>
    <property type="match status" value="1"/>
</dbReference>
<dbReference type="PROSITE" id="PS00247">
    <property type="entry name" value="HBGF_FGF"/>
    <property type="match status" value="1"/>
</dbReference>
<keyword id="KW-0325">Glycoprotein</keyword>
<keyword id="KW-0339">Growth factor</keyword>
<keyword id="KW-1185">Reference proteome</keyword>
<keyword id="KW-0964">Secreted</keyword>
<keyword id="KW-0732">Signal</keyword>
<comment type="function">
    <text>Plays an important role in the regulation of embryonic development, cell proliferation and cell differentiation. Required for normal branching morphogenesis. May play a role in wound healing.</text>
</comment>
<comment type="subunit">
    <text evidence="1">Interacts with FGFR1 and FGFR2. Interacts with FGFBP1 (By similarity).</text>
</comment>
<comment type="subcellular location">
    <subcellularLocation>
        <location evidence="3">Secreted</location>
    </subcellularLocation>
</comment>
<comment type="tissue specificity">
    <text>Expressed abundantly in embryos and the lung, and at much lower levels in brain and heart.</text>
</comment>
<comment type="similarity">
    <text evidence="3">Belongs to the heparin-binding growth factors family.</text>
</comment>
<gene>
    <name type="primary">Fgf10</name>
</gene>
<protein>
    <recommendedName>
        <fullName>Fibroblast growth factor 10</fullName>
        <shortName>FGF-10</shortName>
    </recommendedName>
    <alternativeName>
        <fullName>Keratinocyte growth factor 2</fullName>
    </alternativeName>
</protein>
<feature type="signal peptide" evidence="2">
    <location>
        <begin position="1"/>
        <end position="36"/>
    </location>
</feature>
<feature type="chain" id="PRO_0000008982" description="Fibroblast growth factor 10">
    <location>
        <begin position="37"/>
        <end position="209"/>
    </location>
</feature>
<feature type="glycosylation site" description="N-linked (GlcNAc...) asparagine" evidence="2">
    <location>
        <position position="50"/>
    </location>
</feature>
<feature type="glycosylation site" description="N-linked (GlcNAc...) asparagine" evidence="2">
    <location>
        <position position="197"/>
    </location>
</feature>
<name>FGF10_MOUSE</name>
<organism>
    <name type="scientific">Mus musculus</name>
    <name type="common">Mouse</name>
    <dbReference type="NCBI Taxonomy" id="10090"/>
    <lineage>
        <taxon>Eukaryota</taxon>
        <taxon>Metazoa</taxon>
        <taxon>Chordata</taxon>
        <taxon>Craniata</taxon>
        <taxon>Vertebrata</taxon>
        <taxon>Euteleostomi</taxon>
        <taxon>Mammalia</taxon>
        <taxon>Eutheria</taxon>
        <taxon>Euarchontoglires</taxon>
        <taxon>Glires</taxon>
        <taxon>Rodentia</taxon>
        <taxon>Myomorpha</taxon>
        <taxon>Muroidea</taxon>
        <taxon>Muridae</taxon>
        <taxon>Murinae</taxon>
        <taxon>Mus</taxon>
        <taxon>Mus</taxon>
    </lineage>
</organism>